<name>NAR1_COCIM</name>
<feature type="chain" id="PRO_0000383725" description="Cytosolic Fe-S cluster assembly factor NAR1">
    <location>
        <begin position="1"/>
        <end position="618"/>
    </location>
</feature>
<feature type="region of interest" description="Disordered" evidence="3">
    <location>
        <begin position="495"/>
        <end position="516"/>
    </location>
</feature>
<feature type="region of interest" description="Disordered" evidence="3">
    <location>
        <begin position="530"/>
        <end position="560"/>
    </location>
</feature>
<feature type="binding site" evidence="2">
    <location>
        <position position="20"/>
    </location>
    <ligand>
        <name>[4Fe-4S] cluster</name>
        <dbReference type="ChEBI" id="CHEBI:49883"/>
        <label>1</label>
    </ligand>
</feature>
<feature type="binding site" evidence="2">
    <location>
        <position position="61"/>
    </location>
    <ligand>
        <name>[4Fe-4S] cluster</name>
        <dbReference type="ChEBI" id="CHEBI:49883"/>
        <label>1</label>
    </ligand>
</feature>
<feature type="binding site" evidence="2">
    <location>
        <position position="64"/>
    </location>
    <ligand>
        <name>[4Fe-4S] cluster</name>
        <dbReference type="ChEBI" id="CHEBI:49883"/>
        <label>1</label>
    </ligand>
</feature>
<feature type="binding site" evidence="2">
    <location>
        <position position="67"/>
    </location>
    <ligand>
        <name>[4Fe-4S] cluster</name>
        <dbReference type="ChEBI" id="CHEBI:49883"/>
        <label>1</label>
    </ligand>
</feature>
<feature type="binding site" evidence="2">
    <location>
        <position position="212"/>
    </location>
    <ligand>
        <name>[4Fe-4S] cluster</name>
        <dbReference type="ChEBI" id="CHEBI:49883"/>
        <label>2</label>
    </ligand>
</feature>
<feature type="binding site" evidence="2">
    <location>
        <position position="267"/>
    </location>
    <ligand>
        <name>[4Fe-4S] cluster</name>
        <dbReference type="ChEBI" id="CHEBI:49883"/>
        <label>2</label>
    </ligand>
</feature>
<feature type="binding site" evidence="2">
    <location>
        <position position="471"/>
    </location>
    <ligand>
        <name>[4Fe-4S] cluster</name>
        <dbReference type="ChEBI" id="CHEBI:49883"/>
        <label>2</label>
    </ligand>
</feature>
<feature type="binding site" evidence="2">
    <location>
        <position position="475"/>
    </location>
    <ligand>
        <name>[4Fe-4S] cluster</name>
        <dbReference type="ChEBI" id="CHEBI:49883"/>
        <label>2</label>
    </ligand>
</feature>
<keyword id="KW-0004">4Fe-4S</keyword>
<keyword id="KW-0408">Iron</keyword>
<keyword id="KW-0411">Iron-sulfur</keyword>
<keyword id="KW-0479">Metal-binding</keyword>
<keyword id="KW-1185">Reference proteome</keyword>
<comment type="function">
    <text evidence="1">Component of the cytosolic Fe/S protein assembly machinery. Required for maturation of extramitochondrial Fe/S proteins. May play a role in the transfer of pre-assembled Fe/S clusters to target apoproteins (By similarity).</text>
</comment>
<comment type="similarity">
    <text evidence="4">Belongs to the NARF family.</text>
</comment>
<protein>
    <recommendedName>
        <fullName>Cytosolic Fe-S cluster assembly factor NAR1</fullName>
    </recommendedName>
    <alternativeName>
        <fullName>Nuclear architecture-related protein 1</fullName>
    </alternativeName>
</protein>
<proteinExistence type="inferred from homology"/>
<sequence>MSAILSADDLNDFISPGVACIKPVETLPAKSERDESAYEVTTEDKVAAENPSPAQISLTDCLACSGCVTSAEAVLISLQSHAEVLNTLDAYPELRVDGFRNGVQNGATGDARIFVASVSPQVRASMAATYGVSEKEAGYMIEQFLSGPQGLRAGGQHGSGFTWVVDTNVIRDVVLELTTDEVTASRAKFDSTATSESAEFPIPRQPILSSACPGWICYAEKTHPHVLPHLSRLKSPQALTGTFIKTILSKRLNVPPSRIWHLAIMPCFDKKLEASRQELTDASWQTTNHDIFASPAMDQPIRDVDCVITSRELLMLASSRNISLLTLPLTPLPSSFTTPFPDPRIAQFLFPKHHASNQSVSSGPSGGYLHHLLTTHQALHPNSTIQAQRGRNADVIDYTLVSAETGRPIIKAARYYGFRNIQNLVRKLKPAKTSRLPGARAAVSRRTGISASHTAAGGGVSDYAYIEVMACPGGCTNGGGQIRVEDARDTATIATSSIDGSAPTAQTSQHKPTPQEQRAWLARVDEVYYSADSDSHPPSSPSTSLGDEMEIDRPLEPESRSQSVHAILQYWSDMTGIPLPKLVYTTFRKVESDVGKSKNGAADTARVAELAGKIGGGW</sequence>
<evidence type="ECO:0000250" key="1"/>
<evidence type="ECO:0000255" key="2"/>
<evidence type="ECO:0000256" key="3">
    <source>
        <dbReference type="SAM" id="MobiDB-lite"/>
    </source>
</evidence>
<evidence type="ECO:0000305" key="4"/>
<reference key="1">
    <citation type="journal article" date="2009" name="Genome Res.">
        <title>Comparative genomic analyses of the human fungal pathogens Coccidioides and their relatives.</title>
        <authorList>
            <person name="Sharpton T.J."/>
            <person name="Stajich J.E."/>
            <person name="Rounsley S.D."/>
            <person name="Gardner M.J."/>
            <person name="Wortman J.R."/>
            <person name="Jordar V.S."/>
            <person name="Maiti R."/>
            <person name="Kodira C.D."/>
            <person name="Neafsey D.E."/>
            <person name="Zeng Q."/>
            <person name="Hung C.-Y."/>
            <person name="McMahan C."/>
            <person name="Muszewska A."/>
            <person name="Grynberg M."/>
            <person name="Mandel M.A."/>
            <person name="Kellner E.M."/>
            <person name="Barker B.M."/>
            <person name="Galgiani J.N."/>
            <person name="Orbach M.J."/>
            <person name="Kirkland T.N."/>
            <person name="Cole G.T."/>
            <person name="Henn M.R."/>
            <person name="Birren B.W."/>
            <person name="Taylor J.W."/>
        </authorList>
    </citation>
    <scope>NUCLEOTIDE SEQUENCE [LARGE SCALE GENOMIC DNA]</scope>
    <source>
        <strain>RS</strain>
    </source>
</reference>
<reference key="2">
    <citation type="journal article" date="2010" name="Genome Res.">
        <title>Population genomic sequencing of Coccidioides fungi reveals recent hybridization and transposon control.</title>
        <authorList>
            <person name="Neafsey D.E."/>
            <person name="Barker B.M."/>
            <person name="Sharpton T.J."/>
            <person name="Stajich J.E."/>
            <person name="Park D.J."/>
            <person name="Whiston E."/>
            <person name="Hung C.-Y."/>
            <person name="McMahan C."/>
            <person name="White J."/>
            <person name="Sykes S."/>
            <person name="Heiman D."/>
            <person name="Young S."/>
            <person name="Zeng Q."/>
            <person name="Abouelleil A."/>
            <person name="Aftuck L."/>
            <person name="Bessette D."/>
            <person name="Brown A."/>
            <person name="FitzGerald M."/>
            <person name="Lui A."/>
            <person name="Macdonald J.P."/>
            <person name="Priest M."/>
            <person name="Orbach M.J."/>
            <person name="Galgiani J.N."/>
            <person name="Kirkland T.N."/>
            <person name="Cole G.T."/>
            <person name="Birren B.W."/>
            <person name="Henn M.R."/>
            <person name="Taylor J.W."/>
            <person name="Rounsley S.D."/>
        </authorList>
    </citation>
    <scope>GENOME REANNOTATION</scope>
    <source>
        <strain>RS</strain>
    </source>
</reference>
<accession>Q1E736</accession>
<accession>J3KJW2</accession>
<gene>
    <name type="primary">NAR1</name>
    <name type="ORF">CIMG_01627</name>
</gene>
<organism>
    <name type="scientific">Coccidioides immitis (strain RS)</name>
    <name type="common">Valley fever fungus</name>
    <dbReference type="NCBI Taxonomy" id="246410"/>
    <lineage>
        <taxon>Eukaryota</taxon>
        <taxon>Fungi</taxon>
        <taxon>Dikarya</taxon>
        <taxon>Ascomycota</taxon>
        <taxon>Pezizomycotina</taxon>
        <taxon>Eurotiomycetes</taxon>
        <taxon>Eurotiomycetidae</taxon>
        <taxon>Onygenales</taxon>
        <taxon>Onygenaceae</taxon>
        <taxon>Coccidioides</taxon>
    </lineage>
</organism>
<dbReference type="EMBL" id="GG704911">
    <property type="protein sequence ID" value="EAS36273.3"/>
    <property type="molecule type" value="Genomic_DNA"/>
</dbReference>
<dbReference type="RefSeq" id="XP_001247856.1">
    <property type="nucleotide sequence ID" value="XM_001247855.2"/>
</dbReference>
<dbReference type="SMR" id="Q1E736"/>
<dbReference type="FunCoup" id="Q1E736">
    <property type="interactions" value="351"/>
</dbReference>
<dbReference type="STRING" id="246410.Q1E736"/>
<dbReference type="GeneID" id="4567198"/>
<dbReference type="KEGG" id="cim:CIMG_01627"/>
<dbReference type="VEuPathDB" id="FungiDB:CIMG_01627"/>
<dbReference type="InParanoid" id="Q1E736"/>
<dbReference type="OMA" id="GYLHHVL"/>
<dbReference type="OrthoDB" id="10253113at2759"/>
<dbReference type="Proteomes" id="UP000001261">
    <property type="component" value="Unassembled WGS sequence"/>
</dbReference>
<dbReference type="GO" id="GO:0051539">
    <property type="term" value="F:4 iron, 4 sulfur cluster binding"/>
    <property type="evidence" value="ECO:0007669"/>
    <property type="project" value="UniProtKB-KW"/>
</dbReference>
<dbReference type="GO" id="GO:0051536">
    <property type="term" value="F:iron-sulfur cluster binding"/>
    <property type="evidence" value="ECO:0000250"/>
    <property type="project" value="UniProtKB"/>
</dbReference>
<dbReference type="GO" id="GO:0046872">
    <property type="term" value="F:metal ion binding"/>
    <property type="evidence" value="ECO:0007669"/>
    <property type="project" value="UniProtKB-KW"/>
</dbReference>
<dbReference type="GO" id="GO:0016226">
    <property type="term" value="P:iron-sulfur cluster assembly"/>
    <property type="evidence" value="ECO:0000250"/>
    <property type="project" value="UniProtKB"/>
</dbReference>
<dbReference type="FunFam" id="3.30.70.20:FF:000042">
    <property type="entry name" value="Cytosolic Fe-S cluster assembly factor NAR1"/>
    <property type="match status" value="1"/>
</dbReference>
<dbReference type="FunFam" id="3.40.50.1780:FF:000004">
    <property type="entry name" value="Cytosolic Fe-S cluster assembly factor nar1"/>
    <property type="match status" value="1"/>
</dbReference>
<dbReference type="FunFam" id="3.40.50.1780:FF:000015">
    <property type="entry name" value="Cytosolic Fe-S cluster assembly factor nar1"/>
    <property type="match status" value="1"/>
</dbReference>
<dbReference type="Gene3D" id="3.40.50.1780">
    <property type="match status" value="1"/>
</dbReference>
<dbReference type="Gene3D" id="3.40.950.10">
    <property type="entry name" value="Fe-only Hydrogenase (Larger Subunit), Chain L, domain 3"/>
    <property type="match status" value="1"/>
</dbReference>
<dbReference type="InterPro" id="IPR050340">
    <property type="entry name" value="Cytosolic_Fe-S_CAF"/>
</dbReference>
<dbReference type="InterPro" id="IPR009016">
    <property type="entry name" value="Fe_hydrogenase"/>
</dbReference>
<dbReference type="InterPro" id="IPR004108">
    <property type="entry name" value="Fe_hydrogenase_lsu_C"/>
</dbReference>
<dbReference type="PANTHER" id="PTHR11615">
    <property type="entry name" value="NITRATE, FORMATE, IRON DEHYDROGENASE"/>
    <property type="match status" value="1"/>
</dbReference>
<dbReference type="Pfam" id="PF02906">
    <property type="entry name" value="Fe_hyd_lg_C"/>
    <property type="match status" value="1"/>
</dbReference>
<dbReference type="SUPFAM" id="SSF53920">
    <property type="entry name" value="Fe-only hydrogenase"/>
    <property type="match status" value="1"/>
</dbReference>